<name>MDH_KIBAR</name>
<organism>
    <name type="scientific">Kibdelosporangium aridum</name>
    <dbReference type="NCBI Taxonomy" id="2030"/>
    <lineage>
        <taxon>Bacteria</taxon>
        <taxon>Bacillati</taxon>
        <taxon>Actinomycetota</taxon>
        <taxon>Actinomycetes</taxon>
        <taxon>Pseudonocardiales</taxon>
        <taxon>Pseudonocardiaceae</taxon>
        <taxon>Kibdelosporangium</taxon>
    </lineage>
</organism>
<protein>
    <recommendedName>
        <fullName>Malate dehydrogenase</fullName>
        <ecNumber>1.1.1.37</ecNumber>
    </recommendedName>
</protein>
<keyword id="KW-0903">Direct protein sequencing</keyword>
<keyword id="KW-0520">NAD</keyword>
<keyword id="KW-0560">Oxidoreductase</keyword>
<keyword id="KW-0816">Tricarboxylic acid cycle</keyword>
<evidence type="ECO:0000250" key="1"/>
<evidence type="ECO:0000255" key="2">
    <source>
        <dbReference type="PROSITE-ProRule" id="PRU10004"/>
    </source>
</evidence>
<evidence type="ECO:0000305" key="3"/>
<reference key="1">
    <citation type="journal article" date="1989" name="Biol. Chem. Hoppe-Seyler">
        <title>Purification and N-terminal amino-acid sequences of bacterial malate dehydrogenases from six actinomycetales strains and from Phenylobacterium immobile, strain E.</title>
        <authorList>
            <person name="Rommel T.O."/>
            <person name="Hund H.-K."/>
            <person name="Speth A.R."/>
            <person name="Lingens F."/>
        </authorList>
    </citation>
    <scope>PROTEIN SEQUENCE</scope>
</reference>
<proteinExistence type="evidence at protein level"/>
<feature type="chain" id="PRO_0000113370" description="Malate dehydrogenase">
    <location>
        <begin position="1"/>
        <end position="20" status="greater than"/>
    </location>
</feature>
<feature type="binding site" evidence="1">
    <location>
        <begin position="11"/>
        <end position="17"/>
    </location>
    <ligand>
        <name>NAD(+)</name>
        <dbReference type="ChEBI" id="CHEBI:57540"/>
    </ligand>
</feature>
<feature type="non-terminal residue">
    <location>
        <position position="20"/>
    </location>
</feature>
<sequence length="20" mass="1989">TRTPVNVTVTGAAGQIGYAL</sequence>
<comment type="function">
    <text evidence="1">Catalyzes the reversible oxidation of malate to oxaloacetate.</text>
</comment>
<comment type="catalytic activity">
    <reaction evidence="2">
        <text>(S)-malate + NAD(+) = oxaloacetate + NADH + H(+)</text>
        <dbReference type="Rhea" id="RHEA:21432"/>
        <dbReference type="ChEBI" id="CHEBI:15378"/>
        <dbReference type="ChEBI" id="CHEBI:15589"/>
        <dbReference type="ChEBI" id="CHEBI:16452"/>
        <dbReference type="ChEBI" id="CHEBI:57540"/>
        <dbReference type="ChEBI" id="CHEBI:57945"/>
        <dbReference type="EC" id="1.1.1.37"/>
    </reaction>
</comment>
<comment type="similarity">
    <text evidence="3">Belongs to the LDH/MDH superfamily. MDH type 2 family.</text>
</comment>
<dbReference type="EC" id="1.1.1.37"/>
<dbReference type="PIR" id="S04961">
    <property type="entry name" value="S04961"/>
</dbReference>
<dbReference type="GO" id="GO:0030060">
    <property type="term" value="F:L-malate dehydrogenase (NAD+) activity"/>
    <property type="evidence" value="ECO:0007669"/>
    <property type="project" value="UniProtKB-EC"/>
</dbReference>
<dbReference type="GO" id="GO:0006099">
    <property type="term" value="P:tricarboxylic acid cycle"/>
    <property type="evidence" value="ECO:0007669"/>
    <property type="project" value="UniProtKB-KW"/>
</dbReference>
<dbReference type="InterPro" id="IPR036291">
    <property type="entry name" value="NAD(P)-bd_dom_sf"/>
</dbReference>
<dbReference type="SUPFAM" id="SSF51735">
    <property type="entry name" value="NAD(P)-binding Rossmann-fold domains"/>
    <property type="match status" value="1"/>
</dbReference>
<accession>P19978</accession>
<gene>
    <name type="primary">mdh</name>
</gene>